<feature type="chain" id="PRO_0000381557" description="Biotin synthase">
    <location>
        <begin position="1"/>
        <end position="351"/>
    </location>
</feature>
<feature type="domain" description="Radical SAM core" evidence="2">
    <location>
        <begin position="44"/>
        <end position="262"/>
    </location>
</feature>
<feature type="binding site" evidence="1">
    <location>
        <position position="59"/>
    </location>
    <ligand>
        <name>[4Fe-4S] cluster</name>
        <dbReference type="ChEBI" id="CHEBI:49883"/>
        <note>4Fe-4S-S-AdoMet</note>
    </ligand>
</feature>
<feature type="binding site" evidence="1">
    <location>
        <position position="63"/>
    </location>
    <ligand>
        <name>[4Fe-4S] cluster</name>
        <dbReference type="ChEBI" id="CHEBI:49883"/>
        <note>4Fe-4S-S-AdoMet</note>
    </ligand>
</feature>
<feature type="binding site" evidence="1">
    <location>
        <position position="66"/>
    </location>
    <ligand>
        <name>[4Fe-4S] cluster</name>
        <dbReference type="ChEBI" id="CHEBI:49883"/>
        <note>4Fe-4S-S-AdoMet</note>
    </ligand>
</feature>
<feature type="binding site" evidence="1">
    <location>
        <position position="103"/>
    </location>
    <ligand>
        <name>[2Fe-2S] cluster</name>
        <dbReference type="ChEBI" id="CHEBI:190135"/>
    </ligand>
</feature>
<feature type="binding site" evidence="1">
    <location>
        <position position="134"/>
    </location>
    <ligand>
        <name>[2Fe-2S] cluster</name>
        <dbReference type="ChEBI" id="CHEBI:190135"/>
    </ligand>
</feature>
<feature type="binding site" evidence="1">
    <location>
        <position position="194"/>
    </location>
    <ligand>
        <name>[2Fe-2S] cluster</name>
        <dbReference type="ChEBI" id="CHEBI:190135"/>
    </ligand>
</feature>
<feature type="binding site" evidence="1">
    <location>
        <position position="266"/>
    </location>
    <ligand>
        <name>[2Fe-2S] cluster</name>
        <dbReference type="ChEBI" id="CHEBI:190135"/>
    </ligand>
</feature>
<accession>Q4K4T2</accession>
<proteinExistence type="inferred from homology"/>
<sequence>MSASTTATLRHDWTLAEVKALFVQPFNDLLFQAQTVHRAHFDANRVQVSTLLSIKTGACPEDCKYCPQSGHYNTGLEKEKLLEVQKVLEEAARAKAIGSTRFCMGAAWKHPSAKDMPYVLEMVKGVKAMGLETCMTLGRLDQDQTEALAKAGLDYYNHNLDTSPEFYGNIITTRTYSERLQTLAYVRDAGMKICSGGILGMGESLDDRAGLLIQLANLPEHPESVPINMLVKVAGTPLENAEEVDPFDFIRMLAVARILMPQSHVRLSAGREAMNEQMQALAFFAGANSIFYGDKLLTTANPQADKDMQLFARLGIQPEAREEHADEVHQAAIEQALVEQKSSEQFYNAAV</sequence>
<comment type="function">
    <text evidence="1">Catalyzes the conversion of dethiobiotin (DTB) to biotin by the insertion of a sulfur atom into dethiobiotin via a radical-based mechanism.</text>
</comment>
<comment type="catalytic activity">
    <reaction evidence="1">
        <text>(4R,5S)-dethiobiotin + (sulfur carrier)-SH + 2 reduced [2Fe-2S]-[ferredoxin] + 2 S-adenosyl-L-methionine = (sulfur carrier)-H + biotin + 2 5'-deoxyadenosine + 2 L-methionine + 2 oxidized [2Fe-2S]-[ferredoxin]</text>
        <dbReference type="Rhea" id="RHEA:22060"/>
        <dbReference type="Rhea" id="RHEA-COMP:10000"/>
        <dbReference type="Rhea" id="RHEA-COMP:10001"/>
        <dbReference type="Rhea" id="RHEA-COMP:14737"/>
        <dbReference type="Rhea" id="RHEA-COMP:14739"/>
        <dbReference type="ChEBI" id="CHEBI:17319"/>
        <dbReference type="ChEBI" id="CHEBI:29917"/>
        <dbReference type="ChEBI" id="CHEBI:33737"/>
        <dbReference type="ChEBI" id="CHEBI:33738"/>
        <dbReference type="ChEBI" id="CHEBI:57586"/>
        <dbReference type="ChEBI" id="CHEBI:57844"/>
        <dbReference type="ChEBI" id="CHEBI:59789"/>
        <dbReference type="ChEBI" id="CHEBI:64428"/>
        <dbReference type="ChEBI" id="CHEBI:149473"/>
        <dbReference type="EC" id="2.8.1.6"/>
    </reaction>
</comment>
<comment type="cofactor">
    <cofactor evidence="1">
        <name>[4Fe-4S] cluster</name>
        <dbReference type="ChEBI" id="CHEBI:49883"/>
    </cofactor>
    <text evidence="1">Binds 1 [4Fe-4S] cluster. The cluster is coordinated with 3 cysteines and an exchangeable S-adenosyl-L-methionine.</text>
</comment>
<comment type="cofactor">
    <cofactor evidence="1">
        <name>[2Fe-2S] cluster</name>
        <dbReference type="ChEBI" id="CHEBI:190135"/>
    </cofactor>
    <text evidence="1">Binds 1 [2Fe-2S] cluster. The cluster is coordinated with 3 cysteines and 1 arginine.</text>
</comment>
<comment type="pathway">
    <text evidence="1">Cofactor biosynthesis; biotin biosynthesis; biotin from 7,8-diaminononanoate: step 2/2.</text>
</comment>
<comment type="subunit">
    <text evidence="1">Homodimer.</text>
</comment>
<comment type="similarity">
    <text evidence="1">Belongs to the radical SAM superfamily. Biotin synthase family.</text>
</comment>
<evidence type="ECO:0000255" key="1">
    <source>
        <dbReference type="HAMAP-Rule" id="MF_01694"/>
    </source>
</evidence>
<evidence type="ECO:0000255" key="2">
    <source>
        <dbReference type="PROSITE-ProRule" id="PRU01266"/>
    </source>
</evidence>
<keyword id="KW-0001">2Fe-2S</keyword>
<keyword id="KW-0004">4Fe-4S</keyword>
<keyword id="KW-0093">Biotin biosynthesis</keyword>
<keyword id="KW-0408">Iron</keyword>
<keyword id="KW-0411">Iron-sulfur</keyword>
<keyword id="KW-0479">Metal-binding</keyword>
<keyword id="KW-0949">S-adenosyl-L-methionine</keyword>
<keyword id="KW-0808">Transferase</keyword>
<organism>
    <name type="scientific">Pseudomonas fluorescens (strain ATCC BAA-477 / NRRL B-23932 / Pf-5)</name>
    <dbReference type="NCBI Taxonomy" id="220664"/>
    <lineage>
        <taxon>Bacteria</taxon>
        <taxon>Pseudomonadati</taxon>
        <taxon>Pseudomonadota</taxon>
        <taxon>Gammaproteobacteria</taxon>
        <taxon>Pseudomonadales</taxon>
        <taxon>Pseudomonadaceae</taxon>
        <taxon>Pseudomonas</taxon>
    </lineage>
</organism>
<dbReference type="EC" id="2.8.1.6" evidence="1"/>
<dbReference type="EMBL" id="CP000076">
    <property type="protein sequence ID" value="AAY94883.2"/>
    <property type="molecule type" value="Genomic_DNA"/>
</dbReference>
<dbReference type="RefSeq" id="WP_011063868.1">
    <property type="nucleotide sequence ID" value="NC_004129.6"/>
</dbReference>
<dbReference type="SMR" id="Q4K4T2"/>
<dbReference type="STRING" id="220664.PFL_5693"/>
<dbReference type="GeneID" id="57478643"/>
<dbReference type="KEGG" id="pfl:PFL_5693"/>
<dbReference type="PATRIC" id="fig|220664.5.peg.5804"/>
<dbReference type="eggNOG" id="COG0502">
    <property type="taxonomic scope" value="Bacteria"/>
</dbReference>
<dbReference type="HOGENOM" id="CLU_033172_1_2_6"/>
<dbReference type="UniPathway" id="UPA00078">
    <property type="reaction ID" value="UER00162"/>
</dbReference>
<dbReference type="Proteomes" id="UP000008540">
    <property type="component" value="Chromosome"/>
</dbReference>
<dbReference type="GO" id="GO:0051537">
    <property type="term" value="F:2 iron, 2 sulfur cluster binding"/>
    <property type="evidence" value="ECO:0007669"/>
    <property type="project" value="UniProtKB-KW"/>
</dbReference>
<dbReference type="GO" id="GO:0051539">
    <property type="term" value="F:4 iron, 4 sulfur cluster binding"/>
    <property type="evidence" value="ECO:0007669"/>
    <property type="project" value="UniProtKB-KW"/>
</dbReference>
<dbReference type="GO" id="GO:0004076">
    <property type="term" value="F:biotin synthase activity"/>
    <property type="evidence" value="ECO:0007669"/>
    <property type="project" value="UniProtKB-UniRule"/>
</dbReference>
<dbReference type="GO" id="GO:0005506">
    <property type="term" value="F:iron ion binding"/>
    <property type="evidence" value="ECO:0007669"/>
    <property type="project" value="UniProtKB-UniRule"/>
</dbReference>
<dbReference type="GO" id="GO:0009102">
    <property type="term" value="P:biotin biosynthetic process"/>
    <property type="evidence" value="ECO:0007669"/>
    <property type="project" value="UniProtKB-UniRule"/>
</dbReference>
<dbReference type="CDD" id="cd01335">
    <property type="entry name" value="Radical_SAM"/>
    <property type="match status" value="1"/>
</dbReference>
<dbReference type="FunFam" id="3.20.20.70:FF:000011">
    <property type="entry name" value="Biotin synthase"/>
    <property type="match status" value="1"/>
</dbReference>
<dbReference type="Gene3D" id="3.20.20.70">
    <property type="entry name" value="Aldolase class I"/>
    <property type="match status" value="1"/>
</dbReference>
<dbReference type="HAMAP" id="MF_01694">
    <property type="entry name" value="BioB"/>
    <property type="match status" value="1"/>
</dbReference>
<dbReference type="InterPro" id="IPR013785">
    <property type="entry name" value="Aldolase_TIM"/>
</dbReference>
<dbReference type="InterPro" id="IPR010722">
    <property type="entry name" value="BATS_dom"/>
</dbReference>
<dbReference type="InterPro" id="IPR002684">
    <property type="entry name" value="Biotin_synth/BioAB"/>
</dbReference>
<dbReference type="InterPro" id="IPR024177">
    <property type="entry name" value="Biotin_synthase"/>
</dbReference>
<dbReference type="InterPro" id="IPR006638">
    <property type="entry name" value="Elp3/MiaA/NifB-like_rSAM"/>
</dbReference>
<dbReference type="InterPro" id="IPR007197">
    <property type="entry name" value="rSAM"/>
</dbReference>
<dbReference type="NCBIfam" id="TIGR00433">
    <property type="entry name" value="bioB"/>
    <property type="match status" value="1"/>
</dbReference>
<dbReference type="PANTHER" id="PTHR22976">
    <property type="entry name" value="BIOTIN SYNTHASE"/>
    <property type="match status" value="1"/>
</dbReference>
<dbReference type="PANTHER" id="PTHR22976:SF2">
    <property type="entry name" value="BIOTIN SYNTHASE, MITOCHONDRIAL"/>
    <property type="match status" value="1"/>
</dbReference>
<dbReference type="Pfam" id="PF06968">
    <property type="entry name" value="BATS"/>
    <property type="match status" value="1"/>
</dbReference>
<dbReference type="Pfam" id="PF04055">
    <property type="entry name" value="Radical_SAM"/>
    <property type="match status" value="1"/>
</dbReference>
<dbReference type="PIRSF" id="PIRSF001619">
    <property type="entry name" value="Biotin_synth"/>
    <property type="match status" value="1"/>
</dbReference>
<dbReference type="SFLD" id="SFLDG01060">
    <property type="entry name" value="BATS_domain_containing"/>
    <property type="match status" value="1"/>
</dbReference>
<dbReference type="SFLD" id="SFLDF00272">
    <property type="entry name" value="biotin_synthase"/>
    <property type="match status" value="1"/>
</dbReference>
<dbReference type="SMART" id="SM00876">
    <property type="entry name" value="BATS"/>
    <property type="match status" value="1"/>
</dbReference>
<dbReference type="SMART" id="SM00729">
    <property type="entry name" value="Elp3"/>
    <property type="match status" value="1"/>
</dbReference>
<dbReference type="SUPFAM" id="SSF102114">
    <property type="entry name" value="Radical SAM enzymes"/>
    <property type="match status" value="1"/>
</dbReference>
<dbReference type="PROSITE" id="PS51918">
    <property type="entry name" value="RADICAL_SAM"/>
    <property type="match status" value="1"/>
</dbReference>
<protein>
    <recommendedName>
        <fullName evidence="1">Biotin synthase</fullName>
        <ecNumber evidence="1">2.8.1.6</ecNumber>
    </recommendedName>
</protein>
<name>BIOB_PSEF5</name>
<gene>
    <name evidence="1" type="primary">bioB</name>
    <name type="ordered locus">PFL_5693</name>
</gene>
<reference key="1">
    <citation type="journal article" date="2005" name="Nat. Biotechnol.">
        <title>Complete genome sequence of the plant commensal Pseudomonas fluorescens Pf-5.</title>
        <authorList>
            <person name="Paulsen I.T."/>
            <person name="Press C.M."/>
            <person name="Ravel J."/>
            <person name="Kobayashi D.Y."/>
            <person name="Myers G.S.A."/>
            <person name="Mavrodi D.V."/>
            <person name="DeBoy R.T."/>
            <person name="Seshadri R."/>
            <person name="Ren Q."/>
            <person name="Madupu R."/>
            <person name="Dodson R.J."/>
            <person name="Durkin A.S."/>
            <person name="Brinkac L.M."/>
            <person name="Daugherty S.C."/>
            <person name="Sullivan S.A."/>
            <person name="Rosovitz M.J."/>
            <person name="Gwinn M.L."/>
            <person name="Zhou L."/>
            <person name="Schneider D.J."/>
            <person name="Cartinhour S.W."/>
            <person name="Nelson W.C."/>
            <person name="Weidman J."/>
            <person name="Watkins K."/>
            <person name="Tran K."/>
            <person name="Khouri H."/>
            <person name="Pierson E.A."/>
            <person name="Pierson L.S. III"/>
            <person name="Thomashow L.S."/>
            <person name="Loper J.E."/>
        </authorList>
    </citation>
    <scope>NUCLEOTIDE SEQUENCE [LARGE SCALE GENOMIC DNA]</scope>
    <source>
        <strain>ATCC BAA-477 / NRRL B-23932 / Pf-5</strain>
    </source>
</reference>